<comment type="function">
    <text evidence="1">One of the primary rRNA binding proteins, it binds directly to 16S rRNA central domain where it helps coordinate assembly of the platform of the 30S subunit.</text>
</comment>
<comment type="subunit">
    <text evidence="1">Part of the 30S ribosomal subunit. Contacts proteins S5 and S12.</text>
</comment>
<comment type="similarity">
    <text evidence="1">Belongs to the universal ribosomal protein uS8 family.</text>
</comment>
<feature type="chain" id="PRO_1000051805" description="Small ribosomal subunit protein uS8">
    <location>
        <begin position="1"/>
        <end position="130"/>
    </location>
</feature>
<accession>A7MWH3</accession>
<organism>
    <name type="scientific">Vibrio campbellii (strain ATCC BAA-1116)</name>
    <dbReference type="NCBI Taxonomy" id="2902295"/>
    <lineage>
        <taxon>Bacteria</taxon>
        <taxon>Pseudomonadati</taxon>
        <taxon>Pseudomonadota</taxon>
        <taxon>Gammaproteobacteria</taxon>
        <taxon>Vibrionales</taxon>
        <taxon>Vibrionaceae</taxon>
        <taxon>Vibrio</taxon>
    </lineage>
</organism>
<dbReference type="EMBL" id="CP000789">
    <property type="protein sequence ID" value="ABU69745.1"/>
    <property type="molecule type" value="Genomic_DNA"/>
</dbReference>
<dbReference type="RefSeq" id="WP_005450567.1">
    <property type="nucleotide sequence ID" value="NC_022269.1"/>
</dbReference>
<dbReference type="SMR" id="A7MWH3"/>
<dbReference type="GeneID" id="83583109"/>
<dbReference type="KEGG" id="vha:VIBHAR_00744"/>
<dbReference type="PATRIC" id="fig|338187.25.peg.1870"/>
<dbReference type="Proteomes" id="UP000008152">
    <property type="component" value="Chromosome I"/>
</dbReference>
<dbReference type="GO" id="GO:1990904">
    <property type="term" value="C:ribonucleoprotein complex"/>
    <property type="evidence" value="ECO:0007669"/>
    <property type="project" value="UniProtKB-KW"/>
</dbReference>
<dbReference type="GO" id="GO:0005840">
    <property type="term" value="C:ribosome"/>
    <property type="evidence" value="ECO:0007669"/>
    <property type="project" value="UniProtKB-KW"/>
</dbReference>
<dbReference type="GO" id="GO:0019843">
    <property type="term" value="F:rRNA binding"/>
    <property type="evidence" value="ECO:0007669"/>
    <property type="project" value="UniProtKB-UniRule"/>
</dbReference>
<dbReference type="GO" id="GO:0003735">
    <property type="term" value="F:structural constituent of ribosome"/>
    <property type="evidence" value="ECO:0007669"/>
    <property type="project" value="InterPro"/>
</dbReference>
<dbReference type="GO" id="GO:0006412">
    <property type="term" value="P:translation"/>
    <property type="evidence" value="ECO:0007669"/>
    <property type="project" value="UniProtKB-UniRule"/>
</dbReference>
<dbReference type="FunFam" id="3.30.1370.30:FF:000003">
    <property type="entry name" value="30S ribosomal protein S8"/>
    <property type="match status" value="1"/>
</dbReference>
<dbReference type="FunFam" id="3.30.1490.10:FF:000001">
    <property type="entry name" value="30S ribosomal protein S8"/>
    <property type="match status" value="1"/>
</dbReference>
<dbReference type="Gene3D" id="3.30.1370.30">
    <property type="match status" value="1"/>
</dbReference>
<dbReference type="Gene3D" id="3.30.1490.10">
    <property type="match status" value="1"/>
</dbReference>
<dbReference type="HAMAP" id="MF_01302_B">
    <property type="entry name" value="Ribosomal_uS8_B"/>
    <property type="match status" value="1"/>
</dbReference>
<dbReference type="InterPro" id="IPR000630">
    <property type="entry name" value="Ribosomal_uS8"/>
</dbReference>
<dbReference type="InterPro" id="IPR047863">
    <property type="entry name" value="Ribosomal_uS8_CS"/>
</dbReference>
<dbReference type="InterPro" id="IPR035987">
    <property type="entry name" value="Ribosomal_uS8_sf"/>
</dbReference>
<dbReference type="NCBIfam" id="NF001109">
    <property type="entry name" value="PRK00136.1"/>
    <property type="match status" value="1"/>
</dbReference>
<dbReference type="PANTHER" id="PTHR11758">
    <property type="entry name" value="40S RIBOSOMAL PROTEIN S15A"/>
    <property type="match status" value="1"/>
</dbReference>
<dbReference type="Pfam" id="PF00410">
    <property type="entry name" value="Ribosomal_S8"/>
    <property type="match status" value="1"/>
</dbReference>
<dbReference type="SUPFAM" id="SSF56047">
    <property type="entry name" value="Ribosomal protein S8"/>
    <property type="match status" value="1"/>
</dbReference>
<dbReference type="PROSITE" id="PS00053">
    <property type="entry name" value="RIBOSOMAL_S8"/>
    <property type="match status" value="1"/>
</dbReference>
<keyword id="KW-0687">Ribonucleoprotein</keyword>
<keyword id="KW-0689">Ribosomal protein</keyword>
<keyword id="KW-0694">RNA-binding</keyword>
<keyword id="KW-0699">rRNA-binding</keyword>
<name>RS8_VIBC1</name>
<proteinExistence type="inferred from homology"/>
<reference key="1">
    <citation type="submission" date="2007-08" db="EMBL/GenBank/DDBJ databases">
        <authorList>
            <consortium name="The Vibrio harveyi Genome Sequencing Project"/>
            <person name="Bassler B."/>
            <person name="Clifton S.W."/>
            <person name="Fulton L."/>
            <person name="Delehaunty K."/>
            <person name="Fronick C."/>
            <person name="Harrison M."/>
            <person name="Markivic C."/>
            <person name="Fulton R."/>
            <person name="Tin-Wollam A.-M."/>
            <person name="Shah N."/>
            <person name="Pepin K."/>
            <person name="Nash W."/>
            <person name="Thiruvilangam P."/>
            <person name="Bhonagiri V."/>
            <person name="Waters C."/>
            <person name="Tu K.C."/>
            <person name="Irgon J."/>
            <person name="Wilson R.K."/>
        </authorList>
    </citation>
    <scope>NUCLEOTIDE SEQUENCE [LARGE SCALE GENOMIC DNA]</scope>
    <source>
        <strain>ATCC BAA-1116 / BB120</strain>
    </source>
</reference>
<gene>
    <name evidence="1" type="primary">rpsH</name>
    <name type="ordered locus">VIBHAR_00744</name>
</gene>
<sequence length="130" mass="14007">MSMQDPISDMLTRVRNGQAANKVAVKMPSSKLKVAIAALLKAEGYIVDFAVEGEAKPELEVTLKYFQAKPVIEQLKRVSRPGLRVYKKKDQLPSVMGGLGIAIVSTSKGLMSDRAARKAGLGGEIICYVA</sequence>
<evidence type="ECO:0000255" key="1">
    <source>
        <dbReference type="HAMAP-Rule" id="MF_01302"/>
    </source>
</evidence>
<evidence type="ECO:0000305" key="2"/>
<protein>
    <recommendedName>
        <fullName evidence="1">Small ribosomal subunit protein uS8</fullName>
    </recommendedName>
    <alternativeName>
        <fullName evidence="2">30S ribosomal protein S8</fullName>
    </alternativeName>
</protein>